<dbReference type="EMBL" id="AP009240">
    <property type="protein sequence ID" value="BAG78032.1"/>
    <property type="molecule type" value="Genomic_DNA"/>
</dbReference>
<dbReference type="RefSeq" id="WP_000921610.1">
    <property type="nucleotide sequence ID" value="NC_011415.1"/>
</dbReference>
<dbReference type="SMR" id="B6I7H5"/>
<dbReference type="KEGG" id="ecy:ECSE_2508"/>
<dbReference type="HOGENOM" id="CLU_030805_9_1_6"/>
<dbReference type="Proteomes" id="UP000008199">
    <property type="component" value="Chromosome"/>
</dbReference>
<dbReference type="CDD" id="cd00885">
    <property type="entry name" value="cinA"/>
    <property type="match status" value="1"/>
</dbReference>
<dbReference type="Gene3D" id="3.40.980.10">
    <property type="entry name" value="MoaB/Mog-like domain"/>
    <property type="match status" value="1"/>
</dbReference>
<dbReference type="HAMAP" id="MF_00226_B">
    <property type="entry name" value="CinA_B"/>
    <property type="match status" value="1"/>
</dbReference>
<dbReference type="InterPro" id="IPR050101">
    <property type="entry name" value="CinA"/>
</dbReference>
<dbReference type="InterPro" id="IPR036653">
    <property type="entry name" value="CinA-like_C"/>
</dbReference>
<dbReference type="InterPro" id="IPR008135">
    <property type="entry name" value="Competence-induced_CinA"/>
</dbReference>
<dbReference type="InterPro" id="IPR036425">
    <property type="entry name" value="MoaB/Mog-like_dom_sf"/>
</dbReference>
<dbReference type="InterPro" id="IPR001453">
    <property type="entry name" value="MoaB/Mog_dom"/>
</dbReference>
<dbReference type="NCBIfam" id="TIGR00200">
    <property type="entry name" value="cinA_nterm"/>
    <property type="match status" value="1"/>
</dbReference>
<dbReference type="NCBIfam" id="TIGR00177">
    <property type="entry name" value="molyb_syn"/>
    <property type="match status" value="1"/>
</dbReference>
<dbReference type="NCBIfam" id="NF002978">
    <property type="entry name" value="PRK03673.1"/>
    <property type="match status" value="1"/>
</dbReference>
<dbReference type="PANTHER" id="PTHR13939">
    <property type="entry name" value="NICOTINAMIDE-NUCLEOTIDE AMIDOHYDROLASE PNCC"/>
    <property type="match status" value="1"/>
</dbReference>
<dbReference type="PANTHER" id="PTHR13939:SF0">
    <property type="entry name" value="NMN AMIDOHYDROLASE-LIKE PROTEIN YFAY"/>
    <property type="match status" value="1"/>
</dbReference>
<dbReference type="Pfam" id="PF00994">
    <property type="entry name" value="MoCF_biosynth"/>
    <property type="match status" value="1"/>
</dbReference>
<dbReference type="PIRSF" id="PIRSF006728">
    <property type="entry name" value="CinA"/>
    <property type="match status" value="1"/>
</dbReference>
<dbReference type="SMART" id="SM00852">
    <property type="entry name" value="MoCF_biosynth"/>
    <property type="match status" value="1"/>
</dbReference>
<dbReference type="SUPFAM" id="SSF142433">
    <property type="entry name" value="CinA-like"/>
    <property type="match status" value="1"/>
</dbReference>
<dbReference type="SUPFAM" id="SSF53218">
    <property type="entry name" value="Molybdenum cofactor biosynthesis proteins"/>
    <property type="match status" value="1"/>
</dbReference>
<name>CINAL_ECOSE</name>
<evidence type="ECO:0000255" key="1">
    <source>
        <dbReference type="HAMAP-Rule" id="MF_00226"/>
    </source>
</evidence>
<organism>
    <name type="scientific">Escherichia coli (strain SE11)</name>
    <dbReference type="NCBI Taxonomy" id="409438"/>
    <lineage>
        <taxon>Bacteria</taxon>
        <taxon>Pseudomonadati</taxon>
        <taxon>Pseudomonadota</taxon>
        <taxon>Gammaproteobacteria</taxon>
        <taxon>Enterobacterales</taxon>
        <taxon>Enterobacteriaceae</taxon>
        <taxon>Escherichia</taxon>
    </lineage>
</organism>
<sequence>MLKVEMLSTGDEVLHGQIVDTNAAWLADFFFHQGLPLSRRNTVGDNLDDLVTILRERSQHADVLIVNGGLGPTSDDLSALAAATAKGEGLVLHEAWLKEMERYFHERGRVMAPSNRKQAELPASAEFINNPVGTACGFAVQLNRCLMFFTPGVPSEFKVMVEHEILPRLRERFSLPQLPVCLRLTTFGRSESDLAQSLDTLQLPPGVTMGYRSSMPIIELKLTGPASEQQAMEKLWLDVKRVAGQSVIFEGTEGLPAQISRELQNRQFSLTLSEQFTGGLLALQLSRAGAPLLACEVVPSQEETLAQTAHWITERRANHFAGLALAVSGFENEHLNFALATPDGTFALRVRFSTTRYSLAIRQEVCAMMALNMLRRWLNGQDIASEHGWIEVIESMTLSV</sequence>
<accession>B6I7H5</accession>
<comment type="similarity">
    <text evidence="1">Belongs to the CinA family.</text>
</comment>
<protein>
    <recommendedName>
        <fullName evidence="1">CinA-like protein</fullName>
    </recommendedName>
</protein>
<reference key="1">
    <citation type="journal article" date="2008" name="DNA Res.">
        <title>Complete genome sequence and comparative analysis of the wild-type commensal Escherichia coli strain SE11 isolated from a healthy adult.</title>
        <authorList>
            <person name="Oshima K."/>
            <person name="Toh H."/>
            <person name="Ogura Y."/>
            <person name="Sasamoto H."/>
            <person name="Morita H."/>
            <person name="Park S.-H."/>
            <person name="Ooka T."/>
            <person name="Iyoda S."/>
            <person name="Taylor T.D."/>
            <person name="Hayashi T."/>
            <person name="Itoh K."/>
            <person name="Hattori M."/>
        </authorList>
    </citation>
    <scope>NUCLEOTIDE SEQUENCE [LARGE SCALE GENOMIC DNA]</scope>
    <source>
        <strain>SE11</strain>
    </source>
</reference>
<feature type="chain" id="PRO_1000100318" description="CinA-like protein">
    <location>
        <begin position="1"/>
        <end position="400"/>
    </location>
</feature>
<gene>
    <name type="ordered locus">ECSE_2508</name>
</gene>
<proteinExistence type="inferred from homology"/>